<evidence type="ECO:0000255" key="1">
    <source>
        <dbReference type="HAMAP-Rule" id="MF_01466"/>
    </source>
</evidence>
<dbReference type="EMBL" id="FN822744">
    <property type="protein sequence ID" value="CBL91186.1"/>
    <property type="molecule type" value="Genomic_DNA"/>
</dbReference>
<dbReference type="RefSeq" id="WP_013231315.1">
    <property type="nucleotide sequence ID" value="NC_014319.1"/>
</dbReference>
<dbReference type="SMR" id="D8MEB8"/>
<dbReference type="GeneID" id="34301417"/>
<dbReference type="KEGG" id="lgs:LEGAS_0538"/>
<dbReference type="HOGENOM" id="CLU_030313_4_0_9"/>
<dbReference type="GO" id="GO:0005886">
    <property type="term" value="C:plasma membrane"/>
    <property type="evidence" value="ECO:0007669"/>
    <property type="project" value="UniProtKB-SubCell"/>
</dbReference>
<dbReference type="GO" id="GO:0065002">
    <property type="term" value="P:intracellular protein transmembrane transport"/>
    <property type="evidence" value="ECO:0007669"/>
    <property type="project" value="UniProtKB-UniRule"/>
</dbReference>
<dbReference type="GO" id="GO:0006605">
    <property type="term" value="P:protein targeting"/>
    <property type="evidence" value="ECO:0007669"/>
    <property type="project" value="UniProtKB-UniRule"/>
</dbReference>
<dbReference type="Gene3D" id="1.10.3370.10">
    <property type="entry name" value="SecY subunit domain"/>
    <property type="match status" value="1"/>
</dbReference>
<dbReference type="HAMAP" id="MF_01466">
    <property type="entry name" value="SecY2"/>
    <property type="match status" value="1"/>
</dbReference>
<dbReference type="InterPro" id="IPR002208">
    <property type="entry name" value="SecY/SEC61-alpha"/>
</dbReference>
<dbReference type="InterPro" id="IPR014269">
    <property type="entry name" value="SecY2"/>
</dbReference>
<dbReference type="InterPro" id="IPR023201">
    <property type="entry name" value="SecY_dom_sf"/>
</dbReference>
<dbReference type="NCBIfam" id="TIGR02920">
    <property type="entry name" value="acc_sec_Y2"/>
    <property type="match status" value="1"/>
</dbReference>
<dbReference type="NCBIfam" id="NF009082">
    <property type="entry name" value="PRK12417.1"/>
    <property type="match status" value="1"/>
</dbReference>
<dbReference type="PANTHER" id="PTHR10906">
    <property type="entry name" value="SECY/SEC61-ALPHA FAMILY MEMBER"/>
    <property type="match status" value="1"/>
</dbReference>
<dbReference type="Pfam" id="PF00344">
    <property type="entry name" value="SecY"/>
    <property type="match status" value="1"/>
</dbReference>
<dbReference type="PIRSF" id="PIRSF004557">
    <property type="entry name" value="SecY"/>
    <property type="match status" value="1"/>
</dbReference>
<dbReference type="PRINTS" id="PR00303">
    <property type="entry name" value="SECYTRNLCASE"/>
</dbReference>
<dbReference type="SUPFAM" id="SSF103491">
    <property type="entry name" value="Preprotein translocase SecY subunit"/>
    <property type="match status" value="1"/>
</dbReference>
<keyword id="KW-1003">Cell membrane</keyword>
<keyword id="KW-0472">Membrane</keyword>
<keyword id="KW-0653">Protein transport</keyword>
<keyword id="KW-0811">Translocation</keyword>
<keyword id="KW-0812">Transmembrane</keyword>
<keyword id="KW-1133">Transmembrane helix</keyword>
<keyword id="KW-0813">Transport</keyword>
<accession>D8MEB8</accession>
<reference key="1">
    <citation type="submission" date="2010-04" db="EMBL/GenBank/DDBJ databases">
        <title>Genome sequence and comparative genomics of a food spoilage lactic acid bacterium Leuconostoc gasicomitatum 18811T.</title>
        <authorList>
            <person name="Johansson P."/>
            <person name="Paulin L."/>
            <person name="Vihavainen E.J."/>
            <person name="Salovuori N."/>
            <person name="Alatalo E.R."/>
            <person name="Bjoerkroth J.K."/>
            <person name="Auvinen P."/>
        </authorList>
    </citation>
    <scope>NUCLEOTIDE SEQUENCE [LARGE SCALE GENOMIC DNA]</scope>
    <source>
        <strain>DSM 15947 / CCUG 46042 / CECT 5767 / JCM 12535 / LMG 18811 / NBRC 113245 / TB1-10</strain>
    </source>
</reference>
<sequence length="421" mass="47180">MKGENINNIHLVLKKMLWTSLIVFIFLIGRNILIPGVDAKQLARFLNNQYLLQIVNGTTGGDLSRMSLFALGLGPWMSATILWRVLTLIKRFDLKKIPIERTFLFKIAIAIIIGFIQSIAIISNIDINPKISIFAQTQFGAMATISLIMVSGAVFLVWLSNMNEILGIGGPTVLILASMIINWPTNVSLYILENVRSSLDINSVILMLVIMISIVFLVLLTVVVQRAQRQIPIRRILVNNNFYQQSYLPIQINPAGGMPLMYSMTLLVLPQYILQAVHYWLPNNVLVENGLDNIAITKPLGVTAYIIILFALSIGFAFININPDQIAEDLQQNSDYIDNVEPGDATREYITEIVFRLSFVGALYMSLIAGFPLYFGIIDKQYTQYALTAGSIIILVNLVINIIDQMKALLTKNNYSALFFE</sequence>
<comment type="function">
    <text evidence="1">Part of the accessory SecA2/SecY2 system specifically required for export of possible cell wall proteins. The central subunit of a protein translocation channel.</text>
</comment>
<comment type="subunit">
    <text evidence="1">Component of the accessory SecA2/SecY2 protein translocase complex required to export cell wall proteins. May form heterotrimers with SecE and SecG subunits.</text>
</comment>
<comment type="subcellular location">
    <subcellularLocation>
        <location evidence="1">Cell membrane</location>
        <topology evidence="1">Multi-pass membrane protein</topology>
    </subcellularLocation>
</comment>
<comment type="similarity">
    <text evidence="1">Belongs to the SecY/SEC61-alpha family. SecY2 subfamily.</text>
</comment>
<gene>
    <name evidence="1" type="primary">secY2</name>
    <name type="ordered locus">LEGAS_0538</name>
</gene>
<name>SECY2_LEUGG</name>
<organism>
    <name type="scientific">Leuconostoc gelidum subsp. gasicomitatum (strain DSM 15947 / CCUG 46042 / CECT 5767 / JCM 12535 / LMG 18811 / NBRC 113245 / TB1-10)</name>
    <name type="common">Leuconostoc gasicomitatum</name>
    <dbReference type="NCBI Taxonomy" id="762550"/>
    <lineage>
        <taxon>Bacteria</taxon>
        <taxon>Bacillati</taxon>
        <taxon>Bacillota</taxon>
        <taxon>Bacilli</taxon>
        <taxon>Lactobacillales</taxon>
        <taxon>Lactobacillaceae</taxon>
        <taxon>Leuconostoc</taxon>
        <taxon>Leuconostoc gelidum group</taxon>
    </lineage>
</organism>
<feature type="chain" id="PRO_0000414864" description="Accessory Sec system protein translocase subunit SecY2">
    <location>
        <begin position="1"/>
        <end position="421"/>
    </location>
</feature>
<feature type="transmembrane region" description="Helical" evidence="1">
    <location>
        <begin position="17"/>
        <end position="37"/>
    </location>
</feature>
<feature type="transmembrane region" description="Helical" evidence="1">
    <location>
        <begin position="69"/>
        <end position="89"/>
    </location>
</feature>
<feature type="transmembrane region" description="Helical" evidence="1">
    <location>
        <begin position="102"/>
        <end position="122"/>
    </location>
</feature>
<feature type="transmembrane region" description="Helical" evidence="1">
    <location>
        <begin position="139"/>
        <end position="159"/>
    </location>
</feature>
<feature type="transmembrane region" description="Helical" evidence="1">
    <location>
        <begin position="165"/>
        <end position="185"/>
    </location>
</feature>
<feature type="transmembrane region" description="Helical" evidence="1">
    <location>
        <begin position="204"/>
        <end position="224"/>
    </location>
</feature>
<feature type="transmembrane region" description="Helical" evidence="1">
    <location>
        <begin position="254"/>
        <end position="274"/>
    </location>
</feature>
<feature type="transmembrane region" description="Helical" evidence="1">
    <location>
        <begin position="299"/>
        <end position="319"/>
    </location>
</feature>
<feature type="transmembrane region" description="Helical" evidence="1">
    <location>
        <begin position="358"/>
        <end position="378"/>
    </location>
</feature>
<feature type="transmembrane region" description="Helical" evidence="1">
    <location>
        <begin position="383"/>
        <end position="403"/>
    </location>
</feature>
<proteinExistence type="inferred from homology"/>
<protein>
    <recommendedName>
        <fullName evidence="1">Accessory Sec system protein translocase subunit SecY2</fullName>
    </recommendedName>
</protein>